<protein>
    <recommendedName>
        <fullName evidence="1">Structure-specific endonuclease subunit SLX1 homolog</fullName>
        <ecNumber evidence="1">3.1.-.-</ecNumber>
    </recommendedName>
</protein>
<feature type="chain" id="PRO_0000383753" description="Structure-specific endonuclease subunit SLX1 homolog">
    <location>
        <begin position="1"/>
        <end position="299"/>
    </location>
</feature>
<feature type="domain" description="GIY-YIG" evidence="1">
    <location>
        <begin position="23"/>
        <end position="109"/>
    </location>
</feature>
<feature type="zinc finger region" description="SLX1-type" evidence="1">
    <location>
        <begin position="197"/>
        <end position="250"/>
    </location>
</feature>
<feature type="region of interest" description="Disordered" evidence="2">
    <location>
        <begin position="273"/>
        <end position="299"/>
    </location>
</feature>
<gene>
    <name type="primary">slx1</name>
    <name type="ORF">GF16665</name>
</gene>
<name>SLX1_DROAN</name>
<comment type="function">
    <text evidence="1">Catalytic subunit of a heterodimeric structure-specific endonuclease that resolves DNA secondary structures generated during DNA repair and recombination. Has endonuclease activity towards branched DNA substrates, introducing single-strand cuts in duplex DNA close to junctions with ss-DNA.</text>
</comment>
<comment type="cofactor">
    <cofactor evidence="1">
        <name>a divalent metal cation</name>
        <dbReference type="ChEBI" id="CHEBI:60240"/>
    </cofactor>
</comment>
<comment type="subunit">
    <text evidence="1">Forms a heterodimer with mus312/SLX4.</text>
</comment>
<comment type="subcellular location">
    <subcellularLocation>
        <location evidence="1">Nucleus</location>
    </subcellularLocation>
</comment>
<comment type="similarity">
    <text evidence="1">Belongs to the SLX1 family.</text>
</comment>
<organism>
    <name type="scientific">Drosophila ananassae</name>
    <name type="common">Fruit fly</name>
    <dbReference type="NCBI Taxonomy" id="7217"/>
    <lineage>
        <taxon>Eukaryota</taxon>
        <taxon>Metazoa</taxon>
        <taxon>Ecdysozoa</taxon>
        <taxon>Arthropoda</taxon>
        <taxon>Hexapoda</taxon>
        <taxon>Insecta</taxon>
        <taxon>Pterygota</taxon>
        <taxon>Neoptera</taxon>
        <taxon>Endopterygota</taxon>
        <taxon>Diptera</taxon>
        <taxon>Brachycera</taxon>
        <taxon>Muscomorpha</taxon>
        <taxon>Ephydroidea</taxon>
        <taxon>Drosophilidae</taxon>
        <taxon>Drosophila</taxon>
        <taxon>Sophophora</taxon>
    </lineage>
</organism>
<accession>B3M0F3</accession>
<sequence>MSFRKFTATADPEKDETIARKGHFYGVYLLCSQSLDSRYRGKCYVGFTVNPKRRIKQHNRGCDFGGAKKTSRKGPWQMVMIVHGFPNNIVALQFEWAWQQPTLSTRLKIFPELKRKNPRESHFDYNFRILNRMLGVGPWNRLALKIRWLETDYERGFEVPLPRHMEIVSGKVSISSSQRRKGEDAAATVPVAWAPECHLCMQRIDQPERSRLGCTNPTCRLTCHMLCLANYLLGDEPGHYIPVGGECPLCETRLSWSALLQRKRLLNGIPEELLDQEEADEDLSDGPDVDSDVEVLESD</sequence>
<proteinExistence type="inferred from homology"/>
<evidence type="ECO:0000255" key="1">
    <source>
        <dbReference type="HAMAP-Rule" id="MF_03100"/>
    </source>
</evidence>
<evidence type="ECO:0000256" key="2">
    <source>
        <dbReference type="SAM" id="MobiDB-lite"/>
    </source>
</evidence>
<dbReference type="EC" id="3.1.-.-" evidence="1"/>
<dbReference type="EMBL" id="CH902617">
    <property type="protein sequence ID" value="EDV43159.1"/>
    <property type="molecule type" value="Genomic_DNA"/>
</dbReference>
<dbReference type="SMR" id="B3M0F3"/>
<dbReference type="FunCoup" id="B3M0F3">
    <property type="interactions" value="818"/>
</dbReference>
<dbReference type="STRING" id="7217.B3M0F3"/>
<dbReference type="EnsemblMetazoa" id="FBtr0121365">
    <property type="protein sequence ID" value="FBpp0119857"/>
    <property type="gene ID" value="FBgn0093686"/>
</dbReference>
<dbReference type="EnsemblMetazoa" id="XM_001954562.4">
    <property type="protein sequence ID" value="XP_001954598.2"/>
    <property type="gene ID" value="LOC6499459"/>
</dbReference>
<dbReference type="GeneID" id="6499459"/>
<dbReference type="KEGG" id="dan:6499459"/>
<dbReference type="eggNOG" id="KOG3005">
    <property type="taxonomic scope" value="Eukaryota"/>
</dbReference>
<dbReference type="HOGENOM" id="CLU_030739_0_0_1"/>
<dbReference type="InParanoid" id="B3M0F3"/>
<dbReference type="OMA" id="HNRGCDF"/>
<dbReference type="OrthoDB" id="24645at2759"/>
<dbReference type="PhylomeDB" id="B3M0F3"/>
<dbReference type="Proteomes" id="UP000007801">
    <property type="component" value="Unassembled WGS sequence"/>
</dbReference>
<dbReference type="GO" id="GO:0033557">
    <property type="term" value="C:Slx1-Slx4 complex"/>
    <property type="evidence" value="ECO:0007669"/>
    <property type="project" value="UniProtKB-UniRule"/>
</dbReference>
<dbReference type="GO" id="GO:0017108">
    <property type="term" value="F:5'-flap endonuclease activity"/>
    <property type="evidence" value="ECO:0007669"/>
    <property type="project" value="InterPro"/>
</dbReference>
<dbReference type="GO" id="GO:0008821">
    <property type="term" value="F:crossover junction DNA endonuclease activity"/>
    <property type="evidence" value="ECO:0007669"/>
    <property type="project" value="TreeGrafter"/>
</dbReference>
<dbReference type="GO" id="GO:0008270">
    <property type="term" value="F:zinc ion binding"/>
    <property type="evidence" value="ECO:0007669"/>
    <property type="project" value="UniProtKB-KW"/>
</dbReference>
<dbReference type="GO" id="GO:0000724">
    <property type="term" value="P:double-strand break repair via homologous recombination"/>
    <property type="evidence" value="ECO:0007669"/>
    <property type="project" value="TreeGrafter"/>
</dbReference>
<dbReference type="CDD" id="cd10455">
    <property type="entry name" value="GIY-YIG_SLX1"/>
    <property type="match status" value="1"/>
</dbReference>
<dbReference type="FunFam" id="3.40.1440.10:FF:000012">
    <property type="entry name" value="Structure-specific endonuclease subunit SLX1 homolog"/>
    <property type="match status" value="1"/>
</dbReference>
<dbReference type="Gene3D" id="3.40.1440.10">
    <property type="entry name" value="GIY-YIG endonuclease"/>
    <property type="match status" value="1"/>
</dbReference>
<dbReference type="Gene3D" id="3.30.40.10">
    <property type="entry name" value="Zinc/RING finger domain, C3HC4 (zinc finger)"/>
    <property type="match status" value="1"/>
</dbReference>
<dbReference type="HAMAP" id="MF_03100">
    <property type="entry name" value="Endonuc_su_Slx1"/>
    <property type="match status" value="1"/>
</dbReference>
<dbReference type="InterPro" id="IPR000305">
    <property type="entry name" value="GIY-YIG_endonuc"/>
</dbReference>
<dbReference type="InterPro" id="IPR035901">
    <property type="entry name" value="GIY-YIG_endonuc_sf"/>
</dbReference>
<dbReference type="InterPro" id="IPR027520">
    <property type="entry name" value="Slx1"/>
</dbReference>
<dbReference type="InterPro" id="IPR048749">
    <property type="entry name" value="SLX1_C"/>
</dbReference>
<dbReference type="InterPro" id="IPR050381">
    <property type="entry name" value="SLX1_endonuclease"/>
</dbReference>
<dbReference type="InterPro" id="IPR013083">
    <property type="entry name" value="Znf_RING/FYVE/PHD"/>
</dbReference>
<dbReference type="PANTHER" id="PTHR20208">
    <property type="entry name" value="STRUCTURE-SPECIFIC ENDONUCLEASE SUBUNIT SLX1"/>
    <property type="match status" value="1"/>
</dbReference>
<dbReference type="PANTHER" id="PTHR20208:SF10">
    <property type="entry name" value="STRUCTURE-SPECIFIC ENDONUCLEASE SUBUNIT SLX1"/>
    <property type="match status" value="1"/>
</dbReference>
<dbReference type="Pfam" id="PF01541">
    <property type="entry name" value="GIY-YIG"/>
    <property type="match status" value="1"/>
</dbReference>
<dbReference type="Pfam" id="PF21202">
    <property type="entry name" value="SLX1_C"/>
    <property type="match status" value="1"/>
</dbReference>
<dbReference type="SMART" id="SM00465">
    <property type="entry name" value="GIYc"/>
    <property type="match status" value="1"/>
</dbReference>
<dbReference type="SUPFAM" id="SSF82771">
    <property type="entry name" value="GIY-YIG endonuclease"/>
    <property type="match status" value="1"/>
</dbReference>
<dbReference type="PROSITE" id="PS50164">
    <property type="entry name" value="GIY_YIG"/>
    <property type="match status" value="1"/>
</dbReference>
<reference key="1">
    <citation type="journal article" date="2007" name="Nature">
        <title>Evolution of genes and genomes on the Drosophila phylogeny.</title>
        <authorList>
            <consortium name="Drosophila 12 genomes consortium"/>
        </authorList>
    </citation>
    <scope>NUCLEOTIDE SEQUENCE [LARGE SCALE GENOMIC DNA]</scope>
    <source>
        <strain>Tucson 14024-0371.13</strain>
    </source>
</reference>
<keyword id="KW-0227">DNA damage</keyword>
<keyword id="KW-0233">DNA recombination</keyword>
<keyword id="KW-0234">DNA repair</keyword>
<keyword id="KW-0255">Endonuclease</keyword>
<keyword id="KW-0378">Hydrolase</keyword>
<keyword id="KW-0479">Metal-binding</keyword>
<keyword id="KW-0540">Nuclease</keyword>
<keyword id="KW-0539">Nucleus</keyword>
<keyword id="KW-1185">Reference proteome</keyword>
<keyword id="KW-0862">Zinc</keyword>
<keyword id="KW-0863">Zinc-finger</keyword>